<reference key="1">
    <citation type="journal article" date="2002" name="Nucleic Acids Res.">
        <title>Genome sequence of Oceanobacillus iheyensis isolated from the Iheya Ridge and its unexpected adaptive capabilities to extreme environments.</title>
        <authorList>
            <person name="Takami H."/>
            <person name="Takaki Y."/>
            <person name="Uchiyama I."/>
        </authorList>
    </citation>
    <scope>NUCLEOTIDE SEQUENCE [LARGE SCALE GENOMIC DNA]</scope>
    <source>
        <strain>DSM 14371 / CIP 107618 / JCM 11309 / KCTC 3954 / HTE831</strain>
    </source>
</reference>
<evidence type="ECO:0000250" key="1"/>
<evidence type="ECO:0000255" key="2">
    <source>
        <dbReference type="HAMAP-Rule" id="MF_00103"/>
    </source>
</evidence>
<comment type="function">
    <text evidence="2">Involved in base excision repair of DNA damaged by oxidation or by mutagenic agents. Acts as a DNA glycosylase that recognizes and removes damaged bases. Has a preference for oxidized purines, such as 7,8-dihydro-8-oxoguanine (8-oxoG). Has AP (apurinic/apyrimidinic) lyase activity and introduces nicks in the DNA strand. Cleaves the DNA backbone by beta-delta elimination to generate a single-strand break at the site of the removed base with both 3'- and 5'-phosphates.</text>
</comment>
<comment type="catalytic activity">
    <reaction evidence="2">
        <text>Hydrolysis of DNA containing ring-opened 7-methylguanine residues, releasing 2,6-diamino-4-hydroxy-5-(N-methyl)formamidopyrimidine.</text>
        <dbReference type="EC" id="3.2.2.23"/>
    </reaction>
</comment>
<comment type="catalytic activity">
    <reaction evidence="2">
        <text>2'-deoxyribonucleotide-(2'-deoxyribose 5'-phosphate)-2'-deoxyribonucleotide-DNA = a 3'-end 2'-deoxyribonucleotide-(2,3-dehydro-2,3-deoxyribose 5'-phosphate)-DNA + a 5'-end 5'-phospho-2'-deoxyribonucleoside-DNA + H(+)</text>
        <dbReference type="Rhea" id="RHEA:66592"/>
        <dbReference type="Rhea" id="RHEA-COMP:13180"/>
        <dbReference type="Rhea" id="RHEA-COMP:16897"/>
        <dbReference type="Rhea" id="RHEA-COMP:17067"/>
        <dbReference type="ChEBI" id="CHEBI:15378"/>
        <dbReference type="ChEBI" id="CHEBI:136412"/>
        <dbReference type="ChEBI" id="CHEBI:157695"/>
        <dbReference type="ChEBI" id="CHEBI:167181"/>
        <dbReference type="EC" id="4.2.99.18"/>
    </reaction>
</comment>
<comment type="cofactor">
    <cofactor evidence="2">
        <name>Zn(2+)</name>
        <dbReference type="ChEBI" id="CHEBI:29105"/>
    </cofactor>
    <text evidence="2">Binds 1 zinc ion per subunit.</text>
</comment>
<comment type="subunit">
    <text evidence="2">Monomer.</text>
</comment>
<comment type="similarity">
    <text evidence="2">Belongs to the FPG family.</text>
</comment>
<proteinExistence type="inferred from homology"/>
<protein>
    <recommendedName>
        <fullName evidence="2">Formamidopyrimidine-DNA glycosylase</fullName>
        <shortName evidence="2">Fapy-DNA glycosylase</shortName>
        <ecNumber evidence="2">3.2.2.23</ecNumber>
    </recommendedName>
    <alternativeName>
        <fullName evidence="2">DNA-(apurinic or apyrimidinic site) lyase MutM</fullName>
        <shortName evidence="2">AP lyase MutM</shortName>
        <ecNumber evidence="2">4.2.99.18</ecNumber>
    </alternativeName>
</protein>
<dbReference type="EC" id="3.2.2.23" evidence="2"/>
<dbReference type="EC" id="4.2.99.18" evidence="2"/>
<dbReference type="EMBL" id="BA000028">
    <property type="protein sequence ID" value="BAC14118.1"/>
    <property type="molecule type" value="Genomic_DNA"/>
</dbReference>
<dbReference type="RefSeq" id="WP_011066556.1">
    <property type="nucleotide sequence ID" value="NC_004193.1"/>
</dbReference>
<dbReference type="SMR" id="Q8EPE6"/>
<dbReference type="STRING" id="221109.gene:10734410"/>
<dbReference type="KEGG" id="oih:OB2162"/>
<dbReference type="eggNOG" id="COG0266">
    <property type="taxonomic scope" value="Bacteria"/>
</dbReference>
<dbReference type="HOGENOM" id="CLU_038423_1_3_9"/>
<dbReference type="OrthoDB" id="9800855at2"/>
<dbReference type="PhylomeDB" id="Q8EPE6"/>
<dbReference type="Proteomes" id="UP000000822">
    <property type="component" value="Chromosome"/>
</dbReference>
<dbReference type="GO" id="GO:0034039">
    <property type="term" value="F:8-oxo-7,8-dihydroguanine DNA N-glycosylase activity"/>
    <property type="evidence" value="ECO:0007669"/>
    <property type="project" value="TreeGrafter"/>
</dbReference>
<dbReference type="GO" id="GO:0140078">
    <property type="term" value="F:class I DNA-(apurinic or apyrimidinic site) endonuclease activity"/>
    <property type="evidence" value="ECO:0007669"/>
    <property type="project" value="UniProtKB-EC"/>
</dbReference>
<dbReference type="GO" id="GO:0003684">
    <property type="term" value="F:damaged DNA binding"/>
    <property type="evidence" value="ECO:0007669"/>
    <property type="project" value="InterPro"/>
</dbReference>
<dbReference type="GO" id="GO:0008270">
    <property type="term" value="F:zinc ion binding"/>
    <property type="evidence" value="ECO:0007669"/>
    <property type="project" value="UniProtKB-UniRule"/>
</dbReference>
<dbReference type="GO" id="GO:0006284">
    <property type="term" value="P:base-excision repair"/>
    <property type="evidence" value="ECO:0007669"/>
    <property type="project" value="InterPro"/>
</dbReference>
<dbReference type="CDD" id="cd08966">
    <property type="entry name" value="EcFpg-like_N"/>
    <property type="match status" value="1"/>
</dbReference>
<dbReference type="FunFam" id="1.10.8.50:FF:000003">
    <property type="entry name" value="Formamidopyrimidine-DNA glycosylase"/>
    <property type="match status" value="1"/>
</dbReference>
<dbReference type="FunFam" id="3.20.190.10:FF:000001">
    <property type="entry name" value="Formamidopyrimidine-DNA glycosylase"/>
    <property type="match status" value="1"/>
</dbReference>
<dbReference type="Gene3D" id="1.10.8.50">
    <property type="match status" value="1"/>
</dbReference>
<dbReference type="Gene3D" id="3.20.190.10">
    <property type="entry name" value="MutM-like, N-terminal"/>
    <property type="match status" value="1"/>
</dbReference>
<dbReference type="HAMAP" id="MF_00103">
    <property type="entry name" value="Fapy_DNA_glycosyl"/>
    <property type="match status" value="1"/>
</dbReference>
<dbReference type="InterPro" id="IPR015886">
    <property type="entry name" value="DNA_glyclase/AP_lyase_DNA-bd"/>
</dbReference>
<dbReference type="InterPro" id="IPR015887">
    <property type="entry name" value="DNA_glyclase_Znf_dom_DNA_BS"/>
</dbReference>
<dbReference type="InterPro" id="IPR020629">
    <property type="entry name" value="Formamido-pyr_DNA_Glyclase"/>
</dbReference>
<dbReference type="InterPro" id="IPR012319">
    <property type="entry name" value="FPG_cat"/>
</dbReference>
<dbReference type="InterPro" id="IPR035937">
    <property type="entry name" value="MutM-like_N-ter"/>
</dbReference>
<dbReference type="InterPro" id="IPR010979">
    <property type="entry name" value="Ribosomal_uS13-like_H2TH"/>
</dbReference>
<dbReference type="InterPro" id="IPR000214">
    <property type="entry name" value="Znf_DNA_glyclase/AP_lyase"/>
</dbReference>
<dbReference type="InterPro" id="IPR010663">
    <property type="entry name" value="Znf_FPG/IleRS"/>
</dbReference>
<dbReference type="NCBIfam" id="TIGR00577">
    <property type="entry name" value="fpg"/>
    <property type="match status" value="1"/>
</dbReference>
<dbReference type="NCBIfam" id="NF002211">
    <property type="entry name" value="PRK01103.1"/>
    <property type="match status" value="1"/>
</dbReference>
<dbReference type="PANTHER" id="PTHR22993">
    <property type="entry name" value="FORMAMIDOPYRIMIDINE-DNA GLYCOSYLASE"/>
    <property type="match status" value="1"/>
</dbReference>
<dbReference type="PANTHER" id="PTHR22993:SF9">
    <property type="entry name" value="FORMAMIDOPYRIMIDINE-DNA GLYCOSYLASE"/>
    <property type="match status" value="1"/>
</dbReference>
<dbReference type="Pfam" id="PF01149">
    <property type="entry name" value="Fapy_DNA_glyco"/>
    <property type="match status" value="1"/>
</dbReference>
<dbReference type="Pfam" id="PF06831">
    <property type="entry name" value="H2TH"/>
    <property type="match status" value="1"/>
</dbReference>
<dbReference type="Pfam" id="PF06827">
    <property type="entry name" value="zf-FPG_IleRS"/>
    <property type="match status" value="1"/>
</dbReference>
<dbReference type="SMART" id="SM00898">
    <property type="entry name" value="Fapy_DNA_glyco"/>
    <property type="match status" value="1"/>
</dbReference>
<dbReference type="SMART" id="SM01232">
    <property type="entry name" value="H2TH"/>
    <property type="match status" value="1"/>
</dbReference>
<dbReference type="SUPFAM" id="SSF57716">
    <property type="entry name" value="Glucocorticoid receptor-like (DNA-binding domain)"/>
    <property type="match status" value="1"/>
</dbReference>
<dbReference type="SUPFAM" id="SSF81624">
    <property type="entry name" value="N-terminal domain of MutM-like DNA repair proteins"/>
    <property type="match status" value="1"/>
</dbReference>
<dbReference type="SUPFAM" id="SSF46946">
    <property type="entry name" value="S13-like H2TH domain"/>
    <property type="match status" value="1"/>
</dbReference>
<dbReference type="PROSITE" id="PS51068">
    <property type="entry name" value="FPG_CAT"/>
    <property type="match status" value="1"/>
</dbReference>
<dbReference type="PROSITE" id="PS01242">
    <property type="entry name" value="ZF_FPG_1"/>
    <property type="match status" value="1"/>
</dbReference>
<dbReference type="PROSITE" id="PS51066">
    <property type="entry name" value="ZF_FPG_2"/>
    <property type="match status" value="1"/>
</dbReference>
<feature type="initiator methionine" description="Removed" evidence="1">
    <location>
        <position position="1"/>
    </location>
</feature>
<feature type="chain" id="PRO_0000170845" description="Formamidopyrimidine-DNA glycosylase">
    <location>
        <begin position="2"/>
        <end position="280"/>
    </location>
</feature>
<feature type="zinc finger region" description="FPG-type" evidence="2">
    <location>
        <begin position="240"/>
        <end position="274"/>
    </location>
</feature>
<feature type="active site" description="Schiff-base intermediate with DNA" evidence="2">
    <location>
        <position position="2"/>
    </location>
</feature>
<feature type="active site" description="Proton donor" evidence="2">
    <location>
        <position position="3"/>
    </location>
</feature>
<feature type="active site" description="Proton donor; for beta-elimination activity" evidence="2">
    <location>
        <position position="60"/>
    </location>
</feature>
<feature type="active site" description="Proton donor; for delta-elimination activity" evidence="2">
    <location>
        <position position="264"/>
    </location>
</feature>
<feature type="binding site" evidence="2">
    <location>
        <position position="93"/>
    </location>
    <ligand>
        <name>DNA</name>
        <dbReference type="ChEBI" id="CHEBI:16991"/>
    </ligand>
</feature>
<feature type="binding site" evidence="2">
    <location>
        <position position="112"/>
    </location>
    <ligand>
        <name>DNA</name>
        <dbReference type="ChEBI" id="CHEBI:16991"/>
    </ligand>
</feature>
<keyword id="KW-0227">DNA damage</keyword>
<keyword id="KW-0234">DNA repair</keyword>
<keyword id="KW-0238">DNA-binding</keyword>
<keyword id="KW-0326">Glycosidase</keyword>
<keyword id="KW-0378">Hydrolase</keyword>
<keyword id="KW-0456">Lyase</keyword>
<keyword id="KW-0479">Metal-binding</keyword>
<keyword id="KW-0511">Multifunctional enzyme</keyword>
<keyword id="KW-1185">Reference proteome</keyword>
<keyword id="KW-0862">Zinc</keyword>
<keyword id="KW-0863">Zinc-finger</keyword>
<organism>
    <name type="scientific">Oceanobacillus iheyensis (strain DSM 14371 / CIP 107618 / JCM 11309 / KCTC 3954 / HTE831)</name>
    <dbReference type="NCBI Taxonomy" id="221109"/>
    <lineage>
        <taxon>Bacteria</taxon>
        <taxon>Bacillati</taxon>
        <taxon>Bacillota</taxon>
        <taxon>Bacilli</taxon>
        <taxon>Bacillales</taxon>
        <taxon>Bacillaceae</taxon>
        <taxon>Oceanobacillus</taxon>
    </lineage>
</organism>
<name>FPG_OCEIH</name>
<accession>Q8EPE6</accession>
<sequence>MPELPEVETIKETLKLFVCNKTIKHIDIEWPNMIKHPDDVEEFKALVTGQTIRSMGRKGKFLLFYLDEYVLISHLRMEGKYSVHSPGDPVKKHTHVTFYFSNGEELRYNDVRKFGTMHVYPIGEEFMHKPLNQLGPDPFDTSFNLEYFYEKLKRTDRYIKTALLDQSIVTGLGNIYVDETLFRANVHPLKRCSKLSKQEVKKLQINAKETLRDAIKAGGTTIRSYVNTQGDMGMFQQDLYVYGQHSKPCRVCGADIIKIKVGGRGTHLCPTCQPNKQGVR</sequence>
<gene>
    <name evidence="2" type="primary">mutM</name>
    <name evidence="2" type="synonym">fpg</name>
    <name type="ordered locus">OB2162</name>
</gene>